<organism>
    <name type="scientific">Rickettsia prowazekii (strain Madrid E)</name>
    <dbReference type="NCBI Taxonomy" id="272947"/>
    <lineage>
        <taxon>Bacteria</taxon>
        <taxon>Pseudomonadati</taxon>
        <taxon>Pseudomonadota</taxon>
        <taxon>Alphaproteobacteria</taxon>
        <taxon>Rickettsiales</taxon>
        <taxon>Rickettsiaceae</taxon>
        <taxon>Rickettsieae</taxon>
        <taxon>Rickettsia</taxon>
        <taxon>typhus group</taxon>
    </lineage>
</organism>
<name>Y712_RICPR</name>
<reference key="1">
    <citation type="journal article" date="1998" name="Nature">
        <title>The genome sequence of Rickettsia prowazekii and the origin of mitochondria.</title>
        <authorList>
            <person name="Andersson S.G.E."/>
            <person name="Zomorodipour A."/>
            <person name="Andersson J.O."/>
            <person name="Sicheritz-Ponten T."/>
            <person name="Alsmark U.C.M."/>
            <person name="Podowski R.M."/>
            <person name="Naeslund A.K."/>
            <person name="Eriksson A.-S."/>
            <person name="Winkler H.H."/>
            <person name="Kurland C.G."/>
        </authorList>
    </citation>
    <scope>NUCLEOTIDE SEQUENCE [LARGE SCALE GENOMIC DNA]</scope>
    <source>
        <strain>Madrid E</strain>
    </source>
</reference>
<sequence>MSIEKEKFWASHKQVVKEIGGTNLINGKHDLFKAVAYTSDDIEAVESQFGVPIMGLQFHPEMSMYSNAFTCSEKGRDKKIYLSFQQSVWSFHNKQVLLAEFKNSKHYSKTQHPTEDITEKLINYENNKYNNNIIDIFNETSVEIIGYSNVEILN</sequence>
<gene>
    <name type="ordered locus">RP712</name>
</gene>
<feature type="chain" id="PRO_0000101409" description="Putative glutamine amidotransferase-like protein RP712">
    <location>
        <begin position="1"/>
        <end position="154"/>
    </location>
</feature>
<feature type="domain" description="Glutamine amidotransferase type-1" evidence="1">
    <location>
        <begin position="1"/>
        <end position="94"/>
    </location>
</feature>
<dbReference type="EMBL" id="AJ235273">
    <property type="protein sequence ID" value="CAA15145.1"/>
    <property type="molecule type" value="Genomic_DNA"/>
</dbReference>
<dbReference type="PIR" id="A71631">
    <property type="entry name" value="A71631"/>
</dbReference>
<dbReference type="RefSeq" id="NP_221069.1">
    <property type="nucleotide sequence ID" value="NC_000963.1"/>
</dbReference>
<dbReference type="STRING" id="272947.gene:17555786"/>
<dbReference type="EnsemblBacteria" id="CAA15145">
    <property type="protein sequence ID" value="CAA15145"/>
    <property type="gene ID" value="CAA15145"/>
</dbReference>
<dbReference type="KEGG" id="rpr:RP712"/>
<dbReference type="PATRIC" id="fig|272947.5.peg.740"/>
<dbReference type="HOGENOM" id="CLU_119541_0_0_5"/>
<dbReference type="OrthoDB" id="9813383at2"/>
<dbReference type="Proteomes" id="UP000002480">
    <property type="component" value="Chromosome"/>
</dbReference>
<dbReference type="GO" id="GO:0016740">
    <property type="term" value="F:transferase activity"/>
    <property type="evidence" value="ECO:0007669"/>
    <property type="project" value="UniProtKB-KW"/>
</dbReference>
<dbReference type="Gene3D" id="3.40.50.880">
    <property type="match status" value="1"/>
</dbReference>
<dbReference type="InterPro" id="IPR029062">
    <property type="entry name" value="Class_I_gatase-like"/>
</dbReference>
<dbReference type="PROSITE" id="PS51273">
    <property type="entry name" value="GATASE_TYPE_1"/>
    <property type="match status" value="1"/>
</dbReference>
<evidence type="ECO:0000255" key="1">
    <source>
        <dbReference type="PROSITE-ProRule" id="PRU00605"/>
    </source>
</evidence>
<protein>
    <recommendedName>
        <fullName>Putative glutamine amidotransferase-like protein RP712</fullName>
    </recommendedName>
</protein>
<keyword id="KW-0315">Glutamine amidotransferase</keyword>
<keyword id="KW-1185">Reference proteome</keyword>
<keyword id="KW-0808">Transferase</keyword>
<accession>Q9ZCL5</accession>
<proteinExistence type="predicted"/>